<sequence>MDTSRLTLNHFLSRFQLLRPQMTHETLNQRQAAVLIPVVRRPQPGLLLTQRAIHLRKHAGQVAFPGGAVDSTDASLIAAALREAQEEVAIPPQAVEVIGVLPPVDSVTGFQVTPVVGIIPPNLPWRASEDEVSAVFEMPLAQALQLGRYHPLDVYRRGNSHRVWLSWYEHYFVWGMTANILRELALQIGVKP</sequence>
<accession>B4SUL8</accession>
<reference key="1">
    <citation type="journal article" date="2011" name="J. Bacteriol.">
        <title>Comparative genomics of 28 Salmonella enterica isolates: evidence for CRISPR-mediated adaptive sublineage evolution.</title>
        <authorList>
            <person name="Fricke W.F."/>
            <person name="Mammel M.K."/>
            <person name="McDermott P.F."/>
            <person name="Tartera C."/>
            <person name="White D.G."/>
            <person name="Leclerc J.E."/>
            <person name="Ravel J."/>
            <person name="Cebula T.A."/>
        </authorList>
    </citation>
    <scope>NUCLEOTIDE SEQUENCE [LARGE SCALE GENOMIC DNA]</scope>
    <source>
        <strain>SL254</strain>
    </source>
</reference>
<evidence type="ECO:0000255" key="1">
    <source>
        <dbReference type="HAMAP-Rule" id="MF_01592"/>
    </source>
</evidence>
<protein>
    <recommendedName>
        <fullName evidence="1">Uncharacterized Nudix hydrolase NudL</fullName>
        <ecNumber evidence="1">3.6.1.-</ecNumber>
    </recommendedName>
</protein>
<name>NUDL_SALNS</name>
<dbReference type="EC" id="3.6.1.-" evidence="1"/>
<dbReference type="EMBL" id="CP001113">
    <property type="protein sequence ID" value="ACF62493.1"/>
    <property type="molecule type" value="Genomic_DNA"/>
</dbReference>
<dbReference type="RefSeq" id="WP_000381549.1">
    <property type="nucleotide sequence ID" value="NZ_CCMR01000003.1"/>
</dbReference>
<dbReference type="SMR" id="B4SUL8"/>
<dbReference type="KEGG" id="see:SNSL254_A1965"/>
<dbReference type="HOGENOM" id="CLU_040940_5_2_6"/>
<dbReference type="Proteomes" id="UP000008824">
    <property type="component" value="Chromosome"/>
</dbReference>
<dbReference type="GO" id="GO:0010945">
    <property type="term" value="F:coenzyme A diphosphatase activity"/>
    <property type="evidence" value="ECO:0007669"/>
    <property type="project" value="InterPro"/>
</dbReference>
<dbReference type="GO" id="GO:0000287">
    <property type="term" value="F:magnesium ion binding"/>
    <property type="evidence" value="ECO:0007669"/>
    <property type="project" value="UniProtKB-UniRule"/>
</dbReference>
<dbReference type="GO" id="GO:0030145">
    <property type="term" value="F:manganese ion binding"/>
    <property type="evidence" value="ECO:0007669"/>
    <property type="project" value="UniProtKB-UniRule"/>
</dbReference>
<dbReference type="GO" id="GO:0009132">
    <property type="term" value="P:nucleoside diphosphate metabolic process"/>
    <property type="evidence" value="ECO:0007669"/>
    <property type="project" value="InterPro"/>
</dbReference>
<dbReference type="CDD" id="cd03426">
    <property type="entry name" value="NUDIX_CoAse_Nudt7"/>
    <property type="match status" value="1"/>
</dbReference>
<dbReference type="Gene3D" id="3.90.79.10">
    <property type="entry name" value="Nucleoside Triphosphate Pyrophosphohydrolase"/>
    <property type="match status" value="1"/>
</dbReference>
<dbReference type="HAMAP" id="MF_01592">
    <property type="entry name" value="Nudix_NudL"/>
    <property type="match status" value="1"/>
</dbReference>
<dbReference type="InterPro" id="IPR045121">
    <property type="entry name" value="CoAse"/>
</dbReference>
<dbReference type="InterPro" id="IPR015797">
    <property type="entry name" value="NUDIX_hydrolase-like_dom_sf"/>
</dbReference>
<dbReference type="InterPro" id="IPR000086">
    <property type="entry name" value="NUDIX_hydrolase_dom"/>
</dbReference>
<dbReference type="InterPro" id="IPR000059">
    <property type="entry name" value="NUDIX_hydrolase_NudL_CS"/>
</dbReference>
<dbReference type="InterPro" id="IPR023735">
    <property type="entry name" value="Nudix_NudL"/>
</dbReference>
<dbReference type="NCBIfam" id="NF007980">
    <property type="entry name" value="PRK10707.1"/>
    <property type="match status" value="1"/>
</dbReference>
<dbReference type="PANTHER" id="PTHR12992:SF11">
    <property type="entry name" value="MITOCHONDRIAL COENZYME A DIPHOSPHATASE NUDT8"/>
    <property type="match status" value="1"/>
</dbReference>
<dbReference type="PANTHER" id="PTHR12992">
    <property type="entry name" value="NUDIX HYDROLASE"/>
    <property type="match status" value="1"/>
</dbReference>
<dbReference type="Pfam" id="PF00293">
    <property type="entry name" value="NUDIX"/>
    <property type="match status" value="1"/>
</dbReference>
<dbReference type="SUPFAM" id="SSF55811">
    <property type="entry name" value="Nudix"/>
    <property type="match status" value="1"/>
</dbReference>
<dbReference type="PROSITE" id="PS51462">
    <property type="entry name" value="NUDIX"/>
    <property type="match status" value="1"/>
</dbReference>
<dbReference type="PROSITE" id="PS01293">
    <property type="entry name" value="NUDIX_COA"/>
    <property type="match status" value="1"/>
</dbReference>
<keyword id="KW-0378">Hydrolase</keyword>
<keyword id="KW-0460">Magnesium</keyword>
<keyword id="KW-0464">Manganese</keyword>
<keyword id="KW-0479">Metal-binding</keyword>
<organism>
    <name type="scientific">Salmonella newport (strain SL254)</name>
    <dbReference type="NCBI Taxonomy" id="423368"/>
    <lineage>
        <taxon>Bacteria</taxon>
        <taxon>Pseudomonadati</taxon>
        <taxon>Pseudomonadota</taxon>
        <taxon>Gammaproteobacteria</taxon>
        <taxon>Enterobacterales</taxon>
        <taxon>Enterobacteriaceae</taxon>
        <taxon>Salmonella</taxon>
    </lineage>
</organism>
<gene>
    <name evidence="1" type="primary">nudL</name>
    <name type="ordered locus">SNSL254_A1965</name>
</gene>
<feature type="chain" id="PRO_1000147825" description="Uncharacterized Nudix hydrolase NudL">
    <location>
        <begin position="1"/>
        <end position="192"/>
    </location>
</feature>
<feature type="domain" description="Nudix hydrolase" evidence="1">
    <location>
        <begin position="29"/>
        <end position="160"/>
    </location>
</feature>
<feature type="short sequence motif" description="Nudix box">
    <location>
        <begin position="67"/>
        <end position="89"/>
    </location>
</feature>
<feature type="binding site" evidence="1">
    <location>
        <position position="83"/>
    </location>
    <ligand>
        <name>Mg(2+)</name>
        <dbReference type="ChEBI" id="CHEBI:18420"/>
    </ligand>
</feature>
<feature type="binding site" evidence="1">
    <location>
        <position position="87"/>
    </location>
    <ligand>
        <name>Mg(2+)</name>
        <dbReference type="ChEBI" id="CHEBI:18420"/>
    </ligand>
</feature>
<comment type="function">
    <text evidence="1">Probably mediates the hydrolysis of some nucleoside diphosphate derivatives.</text>
</comment>
<comment type="cofactor">
    <cofactor evidence="1">
        <name>Mn(2+)</name>
        <dbReference type="ChEBI" id="CHEBI:29035"/>
    </cofactor>
    <cofactor evidence="1">
        <name>Mg(2+)</name>
        <dbReference type="ChEBI" id="CHEBI:18420"/>
    </cofactor>
</comment>
<comment type="similarity">
    <text evidence="1">Belongs to the Nudix hydrolase family. PCD1 subfamily.</text>
</comment>
<proteinExistence type="inferred from homology"/>